<feature type="chain" id="PRO_0000074469" description="Defensin-A">
    <location>
        <begin position="1"/>
        <end position="43"/>
    </location>
</feature>
<feature type="disulfide bond" evidence="1">
    <location>
        <begin position="3"/>
        <end position="34"/>
    </location>
</feature>
<feature type="disulfide bond" evidence="1">
    <location>
        <begin position="20"/>
        <end position="39"/>
    </location>
</feature>
<feature type="disulfide bond" evidence="1">
    <location>
        <begin position="24"/>
        <end position="41"/>
    </location>
</feature>
<organism evidence="3">
    <name type="scientific">Anomala cuprea</name>
    <name type="common">Cupreous chafer beetle</name>
    <dbReference type="NCBI Taxonomy" id="121601"/>
    <lineage>
        <taxon>Eukaryota</taxon>
        <taxon>Metazoa</taxon>
        <taxon>Ecdysozoa</taxon>
        <taxon>Arthropoda</taxon>
        <taxon>Hexapoda</taxon>
        <taxon>Insecta</taxon>
        <taxon>Pterygota</taxon>
        <taxon>Neoptera</taxon>
        <taxon>Endopterygota</taxon>
        <taxon>Coleoptera</taxon>
        <taxon>Polyphaga</taxon>
        <taxon>Scarabaeiformia</taxon>
        <taxon>Scarabaeidae</taxon>
        <taxon>Rutelinae</taxon>
        <taxon>Anomala</taxon>
    </lineage>
</organism>
<proteinExistence type="evidence at protein level"/>
<dbReference type="SMR" id="P83669"/>
<dbReference type="GO" id="GO:0005615">
    <property type="term" value="C:extracellular space"/>
    <property type="evidence" value="ECO:0007669"/>
    <property type="project" value="TreeGrafter"/>
</dbReference>
<dbReference type="GO" id="GO:0042742">
    <property type="term" value="P:defense response to bacterium"/>
    <property type="evidence" value="ECO:0007669"/>
    <property type="project" value="UniProtKB-KW"/>
</dbReference>
<dbReference type="GO" id="GO:0006959">
    <property type="term" value="P:humoral immune response"/>
    <property type="evidence" value="ECO:0007669"/>
    <property type="project" value="TreeGrafter"/>
</dbReference>
<dbReference type="GO" id="GO:0045087">
    <property type="term" value="P:innate immune response"/>
    <property type="evidence" value="ECO:0007669"/>
    <property type="project" value="UniProtKB-KW"/>
</dbReference>
<dbReference type="Gene3D" id="3.30.30.10">
    <property type="entry name" value="Knottin, scorpion toxin-like"/>
    <property type="match status" value="1"/>
</dbReference>
<dbReference type="InterPro" id="IPR017982">
    <property type="entry name" value="Defensin_insect"/>
</dbReference>
<dbReference type="InterPro" id="IPR001542">
    <property type="entry name" value="Defensin_invertebrate/fungal"/>
</dbReference>
<dbReference type="InterPro" id="IPR003614">
    <property type="entry name" value="Scorpion_toxin-like"/>
</dbReference>
<dbReference type="InterPro" id="IPR036574">
    <property type="entry name" value="Scorpion_toxin-like_sf"/>
</dbReference>
<dbReference type="PANTHER" id="PTHR13645">
    <property type="entry name" value="DEFENSIN"/>
    <property type="match status" value="1"/>
</dbReference>
<dbReference type="PANTHER" id="PTHR13645:SF0">
    <property type="entry name" value="DEFENSIN"/>
    <property type="match status" value="1"/>
</dbReference>
<dbReference type="Pfam" id="PF01097">
    <property type="entry name" value="Defensin_2"/>
    <property type="match status" value="1"/>
</dbReference>
<dbReference type="PRINTS" id="PR00271">
    <property type="entry name" value="DEFENSIN"/>
</dbReference>
<dbReference type="SMART" id="SM00505">
    <property type="entry name" value="Knot1"/>
    <property type="match status" value="1"/>
</dbReference>
<dbReference type="SUPFAM" id="SSF57095">
    <property type="entry name" value="Scorpion toxin-like"/>
    <property type="match status" value="1"/>
</dbReference>
<dbReference type="PROSITE" id="PS51378">
    <property type="entry name" value="INVERT_DEFENSINS"/>
    <property type="match status" value="1"/>
</dbReference>
<evidence type="ECO:0000255" key="1">
    <source>
        <dbReference type="PROSITE-ProRule" id="PRU00710"/>
    </source>
</evidence>
<evidence type="ECO:0000269" key="2">
    <source>
    </source>
</evidence>
<evidence type="ECO:0000305" key="3"/>
<sequence>VTCDLLSFEAKGFAANHSICAAHCLAIGRKGGSCQNGVCVCRN</sequence>
<protein>
    <recommendedName>
        <fullName>Defensin-A</fullName>
    </recommendedName>
</protein>
<reference evidence="3" key="1">
    <citation type="journal article" date="2001" name="Insect Biochem. Mol. Biol.">
        <title>Two novel insect defensins from larvae of the cupreous chafer, Anomala cuprea: purification, amino acid sequences and antibacterial activity.</title>
        <authorList>
            <person name="Yamauchi H."/>
        </authorList>
    </citation>
    <scope>PROTEIN SEQUENCE</scope>
    <scope>FUNCTION</scope>
    <scope>SUBCELLULAR LOCATION</scope>
    <scope>MASS SPECTROMETRY</scope>
    <source>
        <tissue evidence="2">Larval hemolymph</tissue>
    </source>
</reference>
<comment type="function">
    <text evidence="2">Antibacterial protein. Strong activity against the Gram-positive bacteria M.luteus, B.megaterium and S.aureus. Reduced activity against Gram-positive bacterium B.subtilis and weak activity against Gram-negative bacterium X.japonicus. No detectable activity against the Gram-negative bacteria E.asbriae, E.coli, P.aeruginosa and S.marcescens.</text>
</comment>
<comment type="subcellular location">
    <subcellularLocation>
        <location evidence="1 2">Secreted</location>
    </subcellularLocation>
</comment>
<comment type="mass spectrometry"/>
<comment type="similarity">
    <text evidence="1">Belongs to the invertebrate defensin family. Type 1 subfamily.</text>
</comment>
<name>DEFA_ANOCP</name>
<accession>P83669</accession>
<keyword id="KW-0044">Antibiotic</keyword>
<keyword id="KW-0929">Antimicrobial</keyword>
<keyword id="KW-0211">Defensin</keyword>
<keyword id="KW-0903">Direct protein sequencing</keyword>
<keyword id="KW-1015">Disulfide bond</keyword>
<keyword id="KW-0391">Immunity</keyword>
<keyword id="KW-0399">Innate immunity</keyword>
<keyword id="KW-0964">Secreted</keyword>